<gene>
    <name type="primary">U17/U16</name>
</gene>
<keyword id="KW-0010">Activator</keyword>
<keyword id="KW-0025">Alternative splicing</keyword>
<keyword id="KW-0804">Transcription</keyword>
<keyword id="KW-0805">Transcription regulation</keyword>
<accession>P30024</accession>
<accession>Q9DYD9</accession>
<comment type="function">
    <text>Isoform 3 can transactivate the human immunodeficiency virus type 1 promoter.</text>
</comment>
<comment type="alternative products">
    <event type="alternative splicing"/>
    <isoform>
        <id>P30024-1</id>
        <name>1</name>
        <name>Protein U17/U16</name>
        <sequence type="displayed"/>
    </isoform>
    <isoform>
        <id>Q9DYE0-1</id>
        <name>2</name>
        <name>Protein U17</name>
        <sequence type="external"/>
    </isoform>
    <isoform>
        <id>P30024-2</id>
        <name>3</name>
        <name>Protein U16</name>
        <name>B701</name>
        <sequence type="described" ref="VSP_034773"/>
    </isoform>
</comment>
<comment type="PTM">
    <text>Isoform 1 is not glycosylated.</text>
</comment>
<comment type="similarity">
    <text evidence="1">Belongs to the herpesviridae US22 family.</text>
</comment>
<comment type="sequence caution" evidence="1">
    <conflict type="erroneous gene model prediction">
        <sequence resource="EMBL-CDS" id="AAG30203"/>
    </conflict>
</comment>
<organismHost>
    <name type="scientific">Homo sapiens</name>
    <name type="common">Human</name>
    <dbReference type="NCBI Taxonomy" id="9606"/>
</organismHost>
<proteinExistence type="inferred from homology"/>
<dbReference type="EMBL" id="M81789">
    <property type="status" value="NOT_ANNOTATED_CDS"/>
    <property type="molecule type" value="Genomic_DNA"/>
</dbReference>
<dbReference type="EMBL" id="AF294810">
    <property type="protein sequence ID" value="AAG30203.1"/>
    <property type="status" value="ALT_SEQ"/>
    <property type="molecule type" value="Genomic_DNA"/>
</dbReference>
<dbReference type="PIR" id="A42186">
    <property type="entry name" value="WMBE6H"/>
</dbReference>
<dbReference type="InterPro" id="IPR003360">
    <property type="entry name" value="US22-like"/>
</dbReference>
<dbReference type="Pfam" id="PF02393">
    <property type="entry name" value="US22"/>
    <property type="match status" value="1"/>
</dbReference>
<reference key="1">
    <citation type="journal article" date="1992" name="J. Virol.">
        <title>Identification and characterization of a human herpesvirus 6 gene segment that trans activates the human immunodeficiency virus type 1 promoter.</title>
        <authorList>
            <person name="Geng Y."/>
            <person name="Chandran B."/>
            <person name="Josephs S.F."/>
            <person name="Wood C."/>
        </authorList>
    </citation>
    <scope>NUCLEOTIDE SEQUENCE [GENOMIC DNA]</scope>
</reference>
<reference key="2">
    <citation type="journal article" date="2000" name="J. Virol.">
        <title>Characterization of transcripts expressed from human herpesvirus 6A strain GS immediate-early region B U16-U17 open reading frames.</title>
        <authorList>
            <person name="Flebbe-Rehwaldt L.M."/>
            <person name="Wood C."/>
            <person name="Chandran B."/>
        </authorList>
    </citation>
    <scope>NUCLEOTIDE SEQUENCE [GENOMIC DNA]</scope>
    <scope>ALTERNATIVE SPLICING (ISOFORMS 2 AND 3)</scope>
</reference>
<feature type="chain" id="PRO_0000116333" description="Protein U17/U16">
    <location>
        <begin position="1"/>
        <end position="334"/>
    </location>
</feature>
<feature type="splice variant" id="VSP_034773" description="In isoform 3." evidence="1">
    <location>
        <begin position="1"/>
        <end position="191"/>
    </location>
</feature>
<feature type="sequence conflict" description="In Ref. 2; AAG30203." evidence="1" ref="2">
    <original>Y</original>
    <variation>C</variation>
    <location>
        <position position="36"/>
    </location>
</feature>
<protein>
    <recommendedName>
        <fullName>Protein U17/U16</fullName>
    </recommendedName>
</protein>
<organism>
    <name type="scientific">Human herpesvirus 6A (strain GS)</name>
    <name type="common">HHV-6 variant A</name>
    <name type="synonym">Human B lymphotropic virus</name>
    <dbReference type="NCBI Taxonomy" id="10369"/>
    <lineage>
        <taxon>Viruses</taxon>
        <taxon>Duplodnaviria</taxon>
        <taxon>Heunggongvirae</taxon>
        <taxon>Peploviricota</taxon>
        <taxon>Herviviricetes</taxon>
        <taxon>Herpesvirales</taxon>
        <taxon>Orthoherpesviridae</taxon>
        <taxon>Betaherpesvirinae</taxon>
        <taxon>Roseolovirus</taxon>
        <taxon>Roseolovirus humanbeta6a</taxon>
        <taxon>Human betaherpesvirus 6A</taxon>
    </lineage>
</organism>
<name>U16_HHV6G</name>
<sequence length="334" mass="38445">MADERTGDSVKTRYDIALMNLNDIKIAVFRDSLSTYVEQKTGLTIQFNWPKSRCLVISTLCKIPFPTKSAAELQEMCSLLLCCPERLQLLGYVSVWGEETRDVCLTKTLVFAGEDEKFYGLDFVNETLYLLAETTERFAVLGLRRYDPVYREKDIRFLTKIDDVLQSLIDAQDNLWKFATIVYKNSGRHYIMKSCLENNDGVFVLFLTRKEDFPSRMEWNFFSDVYESMPYHGQVIGSIGKTLLYPKTMFVMMDLSGAIYGIDTIGTGIGSCVKIADDFESFLRQGIVRGYRRYKFFHRNISTVQEILPLCPHTSLGPTFSNNYNYDLSSEDDE</sequence>
<evidence type="ECO:0000305" key="1"/>